<comment type="function">
    <text evidence="2 3">Cell-surface receptor that plays a role in cell-cell interactions, cell adhesion and migration, helping them to sense and respond to changes in the tissue microenvironment. Participates thereby in a wide variety of cellular functions including the activation, recirculation and homing of T-lymphocytes, hematopoiesis, inflammation and response to bacterial infection. Engages, through its ectodomain, extracellular matrix components such as hyaluronan/HA, collagen, growth factors, cytokines or proteases and serves as a platform for signal transduction by assembling, via its cytoplasmic domain, protein complexes containing receptor kinases and membrane proteases. Such effectors include PKN2, the RhoGTPases RAC1 and RHOA, Rho-kinases and phospholipase C that coordinate signaling pathways promoting calcium mobilization and actin-mediated cytoskeleton reorganization essential for cell migration and adhesion.</text>
</comment>
<comment type="subunit">
    <text evidence="2 3">Interacts with PKN2 (By similarity). Interacts with TIAM1 and TIAM2 (By similarity). Interacts with HA, as well as other glycosaminoglycans, collagen, laminin, and fibronectin via its N-terminal segment. Interacts with UNC119. Interacts with PDPN (via extracellular domain); this interaction is required for PDPN-mediated directional migration and regulation of lamellipodia extension/stabilization during cell spreading and migration (By similarity). Interacts with RDX, EZR and MSN (By similarity). Interacts with EGFR (By similarity). Interacts with CD74; this complex is essential for the MIF-induced signaling cascade that results in B cell survival (By similarity).</text>
</comment>
<comment type="subcellular location">
    <subcellularLocation>
        <location evidence="2">Cell membrane</location>
        <topology evidence="2">Single-pass type I membrane protein</topology>
    </subcellularLocation>
    <subcellularLocation>
        <location evidence="2">Cell projection</location>
        <location evidence="2">Microvillus</location>
    </subcellularLocation>
    <subcellularLocation>
        <location evidence="3">Secreted</location>
    </subcellularLocation>
    <text evidence="2">Colocalizes with actin in membrane protrusions at wounding edges. Co-localizes with RDX, EZR and MSN in microvilli.</text>
</comment>
<comment type="alternative products">
    <event type="alternative splicing"/>
    <isoform>
        <id>P26051-1</id>
        <name>2</name>
        <name>Long</name>
        <name>Meta-1</name>
        <sequence type="displayed"/>
    </isoform>
    <isoform>
        <id>P26051-2</id>
        <name>1</name>
        <name>Short</name>
        <sequence type="described" ref="VSP_005330"/>
    </isoform>
    <text>Additional isoforms seem to exist.</text>
</comment>
<comment type="domain">
    <text evidence="1">The lectin-like LINK domain is responsible for hyaluronan binding.</text>
</comment>
<comment type="PTM">
    <text evidence="3">N-glycosylated.</text>
</comment>
<comment type="PTM">
    <text evidence="3">O-glycosylated; contains chondroitin sulfate glycans which can be more or less sulfated.</text>
</comment>
<comment type="PTM">
    <text evidence="1">Phosphorylated; activation of PKC results in the dephosphorylation of Ser-467 (constitutive phosphorylation site), and the phosphorylation of Ser-433.</text>
</comment>
<sequence>MDKVWWHTAWGLLCLLQLSLAQQQIDLNITCRYAGVFHVEKNGRYSISRTEAADLCEAFNTTLPTMAQMELALRKGFETCRYGFIEGHVVIPRIHPNAICAANNTGVYILLASNTSHYDTYCFNASAPLEEDCTSVTDLPNSFDGPVTITIVNRDGTRYSKKGEYRTHQEDIDASNIIDEDVSSGSTIEKSTPEGYILHTDLPTSQPTGDRDDAFFIGSTLATIATTPWVSAHTKQNQERTQWNPIHSNPEVLLQTTTRMTDIDRNSTSAHGENWTQEPQPPFNNHEYQDEEETPHATSTTWADPNSTTEEAATQKEKWFENEWQGKNPPTPSEDSHVTEGTTASAHNNHPSQRMTTQSQEDVSWTDFFDPISHPMGQGHQTESKGHSSGNQDSGVTTTSGPARRPQIPEWLIILASLLALALILAVCIAVNSRRRCGQKKKLVINSGNGTVEDRKPSELNGEASKSQEMVHLVNKEPTETPDQFMTADETRNLQSVDMKIGV</sequence>
<gene>
    <name type="primary">Cd44</name>
</gene>
<reference key="1">
    <citation type="journal article" date="1991" name="Cell">
        <title>A new variant of glycoprotein CD44 confers metastatic potential to rat carcinoma cells.</title>
        <authorList>
            <person name="Guenthert U."/>
            <person name="Hofmann M."/>
            <person name="Rudy W."/>
            <person name="Reber S."/>
            <person name="Zoeller M."/>
            <person name="Haussmann I."/>
            <person name="Matzku S."/>
            <person name="Wenzel A."/>
            <person name="Ponta H."/>
            <person name="Herrlich P."/>
        </authorList>
    </citation>
    <scope>NUCLEOTIDE SEQUENCE [MRNA] (ISOFORMS 1 AND 2)</scope>
    <source>
        <strain>BDIX</strain>
        <tissue>Pancreas</tissue>
    </source>
</reference>
<reference key="2">
    <citation type="submission" date="1996-01" db="EMBL/GenBank/DDBJ databases">
        <authorList>
            <person name="Stevens J.W."/>
            <person name="Midura R.J."/>
        </authorList>
    </citation>
    <scope>NUCLEOTIDE SEQUENCE [MRNA] (ISOFORM 1)</scope>
</reference>
<reference key="3">
    <citation type="journal article" date="1998" name="Eur. J. Biochem.">
        <title>CD44 variant exon v5 encodes a tyrosine that is sulphated.</title>
        <authorList>
            <person name="Sleeman J.P."/>
            <person name="Rahmsdorf U."/>
            <person name="Steffen A."/>
            <person name="Ponta H."/>
            <person name="Herrlich P."/>
        </authorList>
    </citation>
    <scope>SULFATION AT TYR-288</scope>
</reference>
<reference key="4">
    <citation type="journal article" date="2012" name="Nat. Commun.">
        <title>Quantitative maps of protein phosphorylation sites across 14 different rat organs and tissues.</title>
        <authorList>
            <person name="Lundby A."/>
            <person name="Secher A."/>
            <person name="Lage K."/>
            <person name="Nordsborg N.B."/>
            <person name="Dmytriyev A."/>
            <person name="Lundby C."/>
            <person name="Olsen J.V."/>
        </authorList>
    </citation>
    <scope>PHOSPHORYLATION [LARGE SCALE ANALYSIS] AT SER-447; THR-451 AND SER-467</scope>
    <scope>IDENTIFICATION BY MASS SPECTROMETRY [LARGE SCALE ANALYSIS]</scope>
</reference>
<feature type="signal peptide">
    <location>
        <begin position="1"/>
        <end position="21"/>
    </location>
</feature>
<feature type="chain" id="PRO_0000026691" description="CD44 antigen">
    <location>
        <begin position="22"/>
        <end position="503"/>
    </location>
</feature>
<feature type="topological domain" description="Extracellular" evidence="4">
    <location>
        <begin position="22"/>
        <end position="410"/>
    </location>
</feature>
<feature type="transmembrane region" description="Helical" evidence="4">
    <location>
        <begin position="411"/>
        <end position="431"/>
    </location>
</feature>
<feature type="topological domain" description="Cytoplasmic" evidence="4">
    <location>
        <begin position="432"/>
        <end position="503"/>
    </location>
</feature>
<feature type="domain" description="Link" evidence="5">
    <location>
        <begin position="35"/>
        <end position="124"/>
    </location>
</feature>
<feature type="region of interest" description="Disordered" evidence="6">
    <location>
        <begin position="172"/>
        <end position="213"/>
    </location>
</feature>
<feature type="region of interest" description="Stem">
    <location>
        <begin position="228"/>
        <end position="410"/>
    </location>
</feature>
<feature type="region of interest" description="Disordered" evidence="6">
    <location>
        <begin position="232"/>
        <end position="252"/>
    </location>
</feature>
<feature type="region of interest" description="Disordered" evidence="6">
    <location>
        <begin position="264"/>
        <end position="404"/>
    </location>
</feature>
<feature type="region of interest" description="Required for interaction with EZR, MSN and RDX and for co-localization to microvilli" evidence="2">
    <location>
        <begin position="434"/>
        <end position="452"/>
    </location>
</feature>
<feature type="compositionally biased region" description="Polar residues" evidence="6">
    <location>
        <begin position="232"/>
        <end position="247"/>
    </location>
</feature>
<feature type="compositionally biased region" description="Polar residues" evidence="6">
    <location>
        <begin position="264"/>
        <end position="278"/>
    </location>
</feature>
<feature type="compositionally biased region" description="Polar residues" evidence="6">
    <location>
        <begin position="296"/>
        <end position="312"/>
    </location>
</feature>
<feature type="compositionally biased region" description="Polar residues" evidence="6">
    <location>
        <begin position="339"/>
        <end position="363"/>
    </location>
</feature>
<feature type="compositionally biased region" description="Polar residues" evidence="6">
    <location>
        <begin position="387"/>
        <end position="401"/>
    </location>
</feature>
<feature type="binding site" evidence="1">
    <location>
        <position position="44"/>
    </location>
    <ligand>
        <name>hyaluronan</name>
        <dbReference type="ChEBI" id="CHEBI:132153"/>
    </ligand>
</feature>
<feature type="binding site" evidence="1">
    <location>
        <position position="81"/>
    </location>
    <ligand>
        <name>hyaluronan</name>
        <dbReference type="ChEBI" id="CHEBI:132153"/>
    </ligand>
</feature>
<feature type="binding site" evidence="1">
    <location>
        <position position="82"/>
    </location>
    <ligand>
        <name>hyaluronan</name>
        <dbReference type="ChEBI" id="CHEBI:132153"/>
    </ligand>
</feature>
<feature type="binding site" evidence="1">
    <location>
        <position position="108"/>
    </location>
    <ligand>
        <name>hyaluronan</name>
        <dbReference type="ChEBI" id="CHEBI:132153"/>
    </ligand>
</feature>
<feature type="modified residue" description="Sulfotyrosine" evidence="7">
    <location>
        <position position="288"/>
    </location>
</feature>
<feature type="modified residue" description="Phosphoserine; by PKC" evidence="3">
    <location>
        <position position="433"/>
    </location>
</feature>
<feature type="modified residue" description="Phosphoserine" evidence="11">
    <location>
        <position position="447"/>
    </location>
</feature>
<feature type="modified residue" description="Phosphothreonine" evidence="11">
    <location>
        <position position="451"/>
    </location>
</feature>
<feature type="modified residue" description="Phosphoserine" evidence="2">
    <location>
        <position position="458"/>
    </location>
</feature>
<feature type="modified residue" description="Phosphoserine" evidence="11">
    <location>
        <position position="467"/>
    </location>
</feature>
<feature type="glycosylation site" description="N-linked (GlcNAc...) asparagine" evidence="4">
    <location>
        <position position="28"/>
    </location>
</feature>
<feature type="glycosylation site" description="N-linked (GlcNAc...) asparagine" evidence="4">
    <location>
        <position position="60"/>
    </location>
</feature>
<feature type="glycosylation site" description="N-linked (GlcNAc...) asparagine" evidence="4">
    <location>
        <position position="103"/>
    </location>
</feature>
<feature type="glycosylation site" description="N-linked (GlcNAc...) asparagine" evidence="4">
    <location>
        <position position="114"/>
    </location>
</feature>
<feature type="glycosylation site" description="N-linked (GlcNAc...) asparagine" evidence="4">
    <location>
        <position position="124"/>
    </location>
</feature>
<feature type="glycosylation site" description="O-linked (Xyl...) (chondroitin sulfate) serine" evidence="3">
    <location>
        <position position="184"/>
    </location>
</feature>
<feature type="glycosylation site" description="N-linked (GlcNAc...) asparagine" evidence="4">
    <location>
        <position position="266"/>
    </location>
</feature>
<feature type="glycosylation site" description="N-linked (GlcNAc...) asparagine" evidence="4">
    <location>
        <position position="274"/>
    </location>
</feature>
<feature type="glycosylation site" description="N-linked (GlcNAc...) asparagine" evidence="4">
    <location>
        <position position="306"/>
    </location>
</feature>
<feature type="disulfide bond" evidence="5">
    <location>
        <begin position="31"/>
        <end position="133"/>
    </location>
</feature>
<feature type="disulfide bond" evidence="5">
    <location>
        <begin position="56"/>
        <end position="122"/>
    </location>
</feature>
<feature type="disulfide bond" evidence="5">
    <location>
        <begin position="80"/>
        <end position="100"/>
    </location>
</feature>
<feature type="splice variant" id="VSP_005330" description="In isoform 1." evidence="8 9">
    <original>IATTPWVSAHTKQNQERTQWNPIHSNPEVLLQTTTRMTDIDRNSTSAHGENWTQEPQPPFNNHEYQDEEETPHATSTTWADPNSTTEEAATQKEKWFENEWQGKNPPTPSEDSHVTEGTTASAHNNHPSQRMTTQSQEDVSWTDFFDPISHPMGQGHQTESK</original>
    <variation>SDGDSSMDPRGGFDTVTHGSELA</variation>
    <location>
        <begin position="224"/>
        <end position="385"/>
    </location>
</feature>
<feature type="sequence conflict" description="In Ref. 2; AAA97915/AAA92920." evidence="10" ref="2">
    <original>R</original>
    <variation>S</variation>
    <location>
        <position position="74"/>
    </location>
</feature>
<accession>P26051</accession>
<accession>Q99021</accession>
<name>CD44_RAT</name>
<keyword id="KW-0025">Alternative splicing</keyword>
<keyword id="KW-0130">Cell adhesion</keyword>
<keyword id="KW-1003">Cell membrane</keyword>
<keyword id="KW-0966">Cell projection</keyword>
<keyword id="KW-1015">Disulfide bond</keyword>
<keyword id="KW-0325">Glycoprotein</keyword>
<keyword id="KW-0472">Membrane</keyword>
<keyword id="KW-0597">Phosphoprotein</keyword>
<keyword id="KW-0654">Proteoglycan</keyword>
<keyword id="KW-0675">Receptor</keyword>
<keyword id="KW-1185">Reference proteome</keyword>
<keyword id="KW-0964">Secreted</keyword>
<keyword id="KW-0732">Signal</keyword>
<keyword id="KW-0765">Sulfation</keyword>
<keyword id="KW-0812">Transmembrane</keyword>
<keyword id="KW-1133">Transmembrane helix</keyword>
<dbReference type="EMBL" id="M61875">
    <property type="protein sequence ID" value="AAA53532.1"/>
    <property type="molecule type" value="mRNA"/>
</dbReference>
<dbReference type="EMBL" id="M61874">
    <property type="protein sequence ID" value="AAA53534.1"/>
    <property type="molecule type" value="mRNA"/>
</dbReference>
<dbReference type="EMBL" id="U52179">
    <property type="protein sequence ID" value="AAA97915.1"/>
    <property type="molecule type" value="mRNA"/>
</dbReference>
<dbReference type="EMBL" id="U46957">
    <property type="protein sequence ID" value="AAA92920.1"/>
    <property type="molecule type" value="mRNA"/>
</dbReference>
<dbReference type="PIR" id="B38745">
    <property type="entry name" value="B38745"/>
</dbReference>
<dbReference type="RefSeq" id="XP_006234693.1">
    <property type="nucleotide sequence ID" value="XM_006234631.3"/>
</dbReference>
<dbReference type="SMR" id="P26051"/>
<dbReference type="BioGRID" id="247441">
    <property type="interactions" value="1"/>
</dbReference>
<dbReference type="CORUM" id="P26051"/>
<dbReference type="FunCoup" id="P26051">
    <property type="interactions" value="239"/>
</dbReference>
<dbReference type="IntAct" id="P26051">
    <property type="interactions" value="1"/>
</dbReference>
<dbReference type="GlyCosmos" id="P26051">
    <property type="glycosylation" value="8 sites, No reported glycans"/>
</dbReference>
<dbReference type="GlyGen" id="P26051">
    <property type="glycosylation" value="10 sites"/>
</dbReference>
<dbReference type="iPTMnet" id="P26051"/>
<dbReference type="PhosphoSitePlus" id="P26051"/>
<dbReference type="SwissPalm" id="P26051"/>
<dbReference type="GeneID" id="25406"/>
<dbReference type="UCSC" id="RGD:2307">
    <molecule id="P26051-1"/>
    <property type="organism name" value="rat"/>
</dbReference>
<dbReference type="AGR" id="RGD:2307"/>
<dbReference type="CTD" id="960"/>
<dbReference type="RGD" id="2307">
    <property type="gene designation" value="Cd44"/>
</dbReference>
<dbReference type="eggNOG" id="ENOG502RX7Q">
    <property type="taxonomic scope" value="Eukaryota"/>
</dbReference>
<dbReference type="InParanoid" id="P26051"/>
<dbReference type="PhylomeDB" id="P26051"/>
<dbReference type="Reactome" id="R-RNO-1474228">
    <property type="pathway name" value="Degradation of the extracellular matrix"/>
</dbReference>
<dbReference type="Reactome" id="R-RNO-202733">
    <property type="pathway name" value="Cell surface interactions at the vascular wall"/>
</dbReference>
<dbReference type="Reactome" id="R-RNO-216083">
    <property type="pathway name" value="Integrin cell surface interactions"/>
</dbReference>
<dbReference type="Reactome" id="R-RNO-2160916">
    <property type="pathway name" value="Hyaluronan uptake and degradation"/>
</dbReference>
<dbReference type="Reactome" id="R-RNO-6798695">
    <property type="pathway name" value="Neutrophil degranulation"/>
</dbReference>
<dbReference type="PRO" id="PR:P26051"/>
<dbReference type="Proteomes" id="UP000002494">
    <property type="component" value="Unplaced"/>
</dbReference>
<dbReference type="GO" id="GO:0016324">
    <property type="term" value="C:apical plasma membrane"/>
    <property type="evidence" value="ECO:0000314"/>
    <property type="project" value="RGD"/>
</dbReference>
<dbReference type="GO" id="GO:0016323">
    <property type="term" value="C:basolateral plasma membrane"/>
    <property type="evidence" value="ECO:0000314"/>
    <property type="project" value="RGD"/>
</dbReference>
<dbReference type="GO" id="GO:0042995">
    <property type="term" value="C:cell projection"/>
    <property type="evidence" value="ECO:0000250"/>
    <property type="project" value="UniProtKB"/>
</dbReference>
<dbReference type="GO" id="GO:0009986">
    <property type="term" value="C:cell surface"/>
    <property type="evidence" value="ECO:0000314"/>
    <property type="project" value="RGD"/>
</dbReference>
<dbReference type="GO" id="GO:0009897">
    <property type="term" value="C:external side of plasma membrane"/>
    <property type="evidence" value="ECO:0000266"/>
    <property type="project" value="RGD"/>
</dbReference>
<dbReference type="GO" id="GO:0005576">
    <property type="term" value="C:extracellular region"/>
    <property type="evidence" value="ECO:0007669"/>
    <property type="project" value="UniProtKB-SubCell"/>
</dbReference>
<dbReference type="GO" id="GO:0098978">
    <property type="term" value="C:glutamatergic synapse"/>
    <property type="evidence" value="ECO:0000314"/>
    <property type="project" value="SynGO"/>
</dbReference>
<dbReference type="GO" id="GO:0031258">
    <property type="term" value="C:lamellipodium membrane"/>
    <property type="evidence" value="ECO:0000250"/>
    <property type="project" value="UniProtKB"/>
</dbReference>
<dbReference type="GO" id="GO:0035692">
    <property type="term" value="C:macrophage migration inhibitory factor receptor complex"/>
    <property type="evidence" value="ECO:0000266"/>
    <property type="project" value="RGD"/>
</dbReference>
<dbReference type="GO" id="GO:0005902">
    <property type="term" value="C:microvillus"/>
    <property type="evidence" value="ECO:0000250"/>
    <property type="project" value="UniProtKB"/>
</dbReference>
<dbReference type="GO" id="GO:0005886">
    <property type="term" value="C:plasma membrane"/>
    <property type="evidence" value="ECO:0000266"/>
    <property type="project" value="RGD"/>
</dbReference>
<dbReference type="GO" id="GO:0098794">
    <property type="term" value="C:postsynapse"/>
    <property type="evidence" value="ECO:0000314"/>
    <property type="project" value="SynGO"/>
</dbReference>
<dbReference type="GO" id="GO:0098793">
    <property type="term" value="C:presynapse"/>
    <property type="evidence" value="ECO:0000314"/>
    <property type="project" value="SynGO"/>
</dbReference>
<dbReference type="GO" id="GO:0032991">
    <property type="term" value="C:protein-containing complex"/>
    <property type="evidence" value="ECO:0000314"/>
    <property type="project" value="RGD"/>
</dbReference>
<dbReference type="GO" id="GO:0038024">
    <property type="term" value="F:cargo receptor activity"/>
    <property type="evidence" value="ECO:0000266"/>
    <property type="project" value="RGD"/>
</dbReference>
<dbReference type="GO" id="GO:0005154">
    <property type="term" value="F:epidermal growth factor receptor binding"/>
    <property type="evidence" value="ECO:0000353"/>
    <property type="project" value="RGD"/>
</dbReference>
<dbReference type="GO" id="GO:0005540">
    <property type="term" value="F:hyaluronic acid binding"/>
    <property type="evidence" value="ECO:0000266"/>
    <property type="project" value="RGD"/>
</dbReference>
<dbReference type="GO" id="GO:0051219">
    <property type="term" value="F:phosphoprotein binding"/>
    <property type="evidence" value="ECO:0000353"/>
    <property type="project" value="RGD"/>
</dbReference>
<dbReference type="GO" id="GO:0019901">
    <property type="term" value="F:protein kinase binding"/>
    <property type="evidence" value="ECO:0000353"/>
    <property type="project" value="RGD"/>
</dbReference>
<dbReference type="GO" id="GO:0004888">
    <property type="term" value="F:transmembrane signaling receptor activity"/>
    <property type="evidence" value="ECO:0000318"/>
    <property type="project" value="GO_Central"/>
</dbReference>
<dbReference type="GO" id="GO:0005114">
    <property type="term" value="F:type II transforming growth factor beta receptor binding"/>
    <property type="evidence" value="ECO:0000266"/>
    <property type="project" value="RGD"/>
</dbReference>
<dbReference type="GO" id="GO:0001955">
    <property type="term" value="P:blood vessel maturation"/>
    <property type="evidence" value="ECO:0000270"/>
    <property type="project" value="RGD"/>
</dbReference>
<dbReference type="GO" id="GO:0060442">
    <property type="term" value="P:branching involved in prostate gland morphogenesis"/>
    <property type="evidence" value="ECO:0000266"/>
    <property type="project" value="RGD"/>
</dbReference>
<dbReference type="GO" id="GO:0001658">
    <property type="term" value="P:branching involved in ureteric bud morphogenesis"/>
    <property type="evidence" value="ECO:0000266"/>
    <property type="project" value="RGD"/>
</dbReference>
<dbReference type="GO" id="GO:0051216">
    <property type="term" value="P:cartilage development"/>
    <property type="evidence" value="ECO:0000266"/>
    <property type="project" value="RGD"/>
</dbReference>
<dbReference type="GO" id="GO:0007155">
    <property type="term" value="P:cell adhesion"/>
    <property type="evidence" value="ECO:0000315"/>
    <property type="project" value="RGD"/>
</dbReference>
<dbReference type="GO" id="GO:0016477">
    <property type="term" value="P:cell migration"/>
    <property type="evidence" value="ECO:0000315"/>
    <property type="project" value="RGD"/>
</dbReference>
<dbReference type="GO" id="GO:0044344">
    <property type="term" value="P:cellular response to fibroblast growth factor stimulus"/>
    <property type="evidence" value="ECO:0000266"/>
    <property type="project" value="RGD"/>
</dbReference>
<dbReference type="GO" id="GO:0019221">
    <property type="term" value="P:cytokine-mediated signaling pathway"/>
    <property type="evidence" value="ECO:0007669"/>
    <property type="project" value="GOC"/>
</dbReference>
<dbReference type="GO" id="GO:0030214">
    <property type="term" value="P:hyaluronan catabolic process"/>
    <property type="evidence" value="ECO:0000266"/>
    <property type="project" value="RGD"/>
</dbReference>
<dbReference type="GO" id="GO:0006954">
    <property type="term" value="P:inflammatory response"/>
    <property type="evidence" value="ECO:0000318"/>
    <property type="project" value="GO_Central"/>
</dbReference>
<dbReference type="GO" id="GO:0034238">
    <property type="term" value="P:macrophage fusion"/>
    <property type="evidence" value="ECO:0000315"/>
    <property type="project" value="RGD"/>
</dbReference>
<dbReference type="GO" id="GO:0070487">
    <property type="term" value="P:monocyte aggregation"/>
    <property type="evidence" value="ECO:0000266"/>
    <property type="project" value="RGD"/>
</dbReference>
<dbReference type="GO" id="GO:0043066">
    <property type="term" value="P:negative regulation of apoptotic process"/>
    <property type="evidence" value="ECO:0000266"/>
    <property type="project" value="RGD"/>
</dbReference>
<dbReference type="GO" id="GO:2000562">
    <property type="term" value="P:negative regulation of CD4-positive, alpha-beta T cell proliferation"/>
    <property type="evidence" value="ECO:0000266"/>
    <property type="project" value="RGD"/>
</dbReference>
<dbReference type="GO" id="GO:0043518">
    <property type="term" value="P:negative regulation of DNA damage response, signal transduction by p53 class mediator"/>
    <property type="evidence" value="ECO:0000266"/>
    <property type="project" value="RGD"/>
</dbReference>
<dbReference type="GO" id="GO:0050728">
    <property type="term" value="P:negative regulation of inflammatory response"/>
    <property type="evidence" value="ECO:0000266"/>
    <property type="project" value="RGD"/>
</dbReference>
<dbReference type="GO" id="GO:1902166">
    <property type="term" value="P:negative regulation of intrinsic apoptotic signaling pathway in response to DNA damage by p53 class mediator"/>
    <property type="evidence" value="ECO:0000266"/>
    <property type="project" value="RGD"/>
</dbReference>
<dbReference type="GO" id="GO:0002906">
    <property type="term" value="P:negative regulation of mature B cell apoptotic process"/>
    <property type="evidence" value="ECO:0000266"/>
    <property type="project" value="RGD"/>
</dbReference>
<dbReference type="GO" id="GO:0045590">
    <property type="term" value="P:negative regulation of regulatory T cell differentiation"/>
    <property type="evidence" value="ECO:0000266"/>
    <property type="project" value="RGD"/>
</dbReference>
<dbReference type="GO" id="GO:0031175">
    <property type="term" value="P:neuron projection development"/>
    <property type="evidence" value="ECO:0000315"/>
    <property type="project" value="RGD"/>
</dbReference>
<dbReference type="GO" id="GO:0070374">
    <property type="term" value="P:positive regulation of ERK1 and ERK2 cascade"/>
    <property type="evidence" value="ECO:0000266"/>
    <property type="project" value="RGD"/>
</dbReference>
<dbReference type="GO" id="GO:0010628">
    <property type="term" value="P:positive regulation of gene expression"/>
    <property type="evidence" value="ECO:0000266"/>
    <property type="project" value="RGD"/>
</dbReference>
<dbReference type="GO" id="GO:0034116">
    <property type="term" value="P:positive regulation of heterotypic cell-cell adhesion"/>
    <property type="evidence" value="ECO:0000266"/>
    <property type="project" value="RGD"/>
</dbReference>
<dbReference type="GO" id="GO:1900625">
    <property type="term" value="P:positive regulation of monocyte aggregation"/>
    <property type="evidence" value="ECO:0000266"/>
    <property type="project" value="RGD"/>
</dbReference>
<dbReference type="GO" id="GO:0033031">
    <property type="term" value="P:positive regulation of neutrophil apoptotic process"/>
    <property type="evidence" value="ECO:0000315"/>
    <property type="project" value="RGD"/>
</dbReference>
<dbReference type="GO" id="GO:0099173">
    <property type="term" value="P:postsynapse organization"/>
    <property type="evidence" value="ECO:0000314"/>
    <property type="project" value="SynGO"/>
</dbReference>
<dbReference type="GO" id="GO:0006898">
    <property type="term" value="P:receptor-mediated endocytosis"/>
    <property type="evidence" value="ECO:0000266"/>
    <property type="project" value="RGD"/>
</dbReference>
<dbReference type="GO" id="GO:0001558">
    <property type="term" value="P:regulation of cell growth"/>
    <property type="evidence" value="ECO:0000314"/>
    <property type="project" value="RGD"/>
</dbReference>
<dbReference type="GO" id="GO:2000392">
    <property type="term" value="P:regulation of lamellipodium morphogenesis"/>
    <property type="evidence" value="ECO:0000250"/>
    <property type="project" value="UniProtKB"/>
</dbReference>
<dbReference type="GO" id="GO:0099159">
    <property type="term" value="P:regulation of modification of postsynaptic structure"/>
    <property type="evidence" value="ECO:0000314"/>
    <property type="project" value="SynGO"/>
</dbReference>
<dbReference type="GO" id="GO:0031667">
    <property type="term" value="P:response to nutrient levels"/>
    <property type="evidence" value="ECO:0000270"/>
    <property type="project" value="RGD"/>
</dbReference>
<dbReference type="GO" id="GO:0033189">
    <property type="term" value="P:response to vitamin A"/>
    <property type="evidence" value="ECO:0000270"/>
    <property type="project" value="RGD"/>
</dbReference>
<dbReference type="GO" id="GO:0042110">
    <property type="term" value="P:T cell activation"/>
    <property type="evidence" value="ECO:0000266"/>
    <property type="project" value="RGD"/>
</dbReference>
<dbReference type="GO" id="GO:0016055">
    <property type="term" value="P:Wnt signaling pathway"/>
    <property type="evidence" value="ECO:0000266"/>
    <property type="project" value="RGD"/>
</dbReference>
<dbReference type="GO" id="GO:0002246">
    <property type="term" value="P:wound healing involved in inflammatory response"/>
    <property type="evidence" value="ECO:0000266"/>
    <property type="project" value="RGD"/>
</dbReference>
<dbReference type="GO" id="GO:0044319">
    <property type="term" value="P:wound healing, spreading of cells"/>
    <property type="evidence" value="ECO:0000250"/>
    <property type="project" value="UniProtKB"/>
</dbReference>
<dbReference type="CDD" id="cd03516">
    <property type="entry name" value="Link_domain_CD44_like"/>
    <property type="match status" value="1"/>
</dbReference>
<dbReference type="FunFam" id="3.10.100.10:FF:000004">
    <property type="entry name" value="CD44 antigen isoform X2"/>
    <property type="match status" value="1"/>
</dbReference>
<dbReference type="Gene3D" id="3.10.100.10">
    <property type="entry name" value="Mannose-Binding Protein A, subunit A"/>
    <property type="match status" value="1"/>
</dbReference>
<dbReference type="InterPro" id="IPR016186">
    <property type="entry name" value="C-type_lectin-like/link_sf"/>
</dbReference>
<dbReference type="InterPro" id="IPR001231">
    <property type="entry name" value="CD44_antigen"/>
</dbReference>
<dbReference type="InterPro" id="IPR043210">
    <property type="entry name" value="CD44_antigen-like"/>
</dbReference>
<dbReference type="InterPro" id="IPR016187">
    <property type="entry name" value="CTDL_fold"/>
</dbReference>
<dbReference type="InterPro" id="IPR000538">
    <property type="entry name" value="Link_dom"/>
</dbReference>
<dbReference type="PANTHER" id="PTHR10225:SF6">
    <property type="entry name" value="CD44 ANTIGEN"/>
    <property type="match status" value="1"/>
</dbReference>
<dbReference type="PANTHER" id="PTHR10225">
    <property type="entry name" value="HYALURONAN RECEPTOR"/>
    <property type="match status" value="1"/>
</dbReference>
<dbReference type="Pfam" id="PF00193">
    <property type="entry name" value="Xlink"/>
    <property type="match status" value="1"/>
</dbReference>
<dbReference type="PRINTS" id="PR00658">
    <property type="entry name" value="CD44"/>
</dbReference>
<dbReference type="PRINTS" id="PR01265">
    <property type="entry name" value="LINKMODULE"/>
</dbReference>
<dbReference type="SMART" id="SM00445">
    <property type="entry name" value="LINK"/>
    <property type="match status" value="1"/>
</dbReference>
<dbReference type="SUPFAM" id="SSF56436">
    <property type="entry name" value="C-type lectin-like"/>
    <property type="match status" value="1"/>
</dbReference>
<dbReference type="PROSITE" id="PS01241">
    <property type="entry name" value="LINK_1"/>
    <property type="match status" value="1"/>
</dbReference>
<dbReference type="PROSITE" id="PS50963">
    <property type="entry name" value="LINK_2"/>
    <property type="match status" value="1"/>
</dbReference>
<proteinExistence type="evidence at protein level"/>
<protein>
    <recommendedName>
        <fullName>CD44 antigen</fullName>
    </recommendedName>
    <alternativeName>
        <fullName>Extracellular matrix receptor III</fullName>
        <shortName>ECMR-III</shortName>
    </alternativeName>
    <alternativeName>
        <fullName>GP90 lymphocyte homing/adhesion receptor</fullName>
    </alternativeName>
    <alternativeName>
        <fullName>HUTCH-I</fullName>
    </alternativeName>
    <alternativeName>
        <fullName>Hermes antigen</fullName>
    </alternativeName>
    <alternativeName>
        <fullName>Hyaluronate receptor</fullName>
    </alternativeName>
    <alternativeName>
        <fullName>Phagocytic glycoprotein 1</fullName>
        <shortName>PGP-1</shortName>
    </alternativeName>
    <alternativeName>
        <fullName>Phagocytic glycoprotein I</fullName>
        <shortName>PGP-I</shortName>
    </alternativeName>
    <cdAntigenName>CD44</cdAntigenName>
</protein>
<organism>
    <name type="scientific">Rattus norvegicus</name>
    <name type="common">Rat</name>
    <dbReference type="NCBI Taxonomy" id="10116"/>
    <lineage>
        <taxon>Eukaryota</taxon>
        <taxon>Metazoa</taxon>
        <taxon>Chordata</taxon>
        <taxon>Craniata</taxon>
        <taxon>Vertebrata</taxon>
        <taxon>Euteleostomi</taxon>
        <taxon>Mammalia</taxon>
        <taxon>Eutheria</taxon>
        <taxon>Euarchontoglires</taxon>
        <taxon>Glires</taxon>
        <taxon>Rodentia</taxon>
        <taxon>Myomorpha</taxon>
        <taxon>Muroidea</taxon>
        <taxon>Muridae</taxon>
        <taxon>Murinae</taxon>
        <taxon>Rattus</taxon>
    </lineage>
</organism>
<evidence type="ECO:0000250" key="1"/>
<evidence type="ECO:0000250" key="2">
    <source>
        <dbReference type="UniProtKB" id="P15379"/>
    </source>
</evidence>
<evidence type="ECO:0000250" key="3">
    <source>
        <dbReference type="UniProtKB" id="P16070"/>
    </source>
</evidence>
<evidence type="ECO:0000255" key="4"/>
<evidence type="ECO:0000255" key="5">
    <source>
        <dbReference type="PROSITE-ProRule" id="PRU00323"/>
    </source>
</evidence>
<evidence type="ECO:0000256" key="6">
    <source>
        <dbReference type="SAM" id="MobiDB-lite"/>
    </source>
</evidence>
<evidence type="ECO:0000269" key="7">
    <source>
    </source>
</evidence>
<evidence type="ECO:0000303" key="8">
    <source>
    </source>
</evidence>
<evidence type="ECO:0000303" key="9">
    <source ref="2"/>
</evidence>
<evidence type="ECO:0000305" key="10"/>
<evidence type="ECO:0007744" key="11">
    <source>
    </source>
</evidence>